<accession>Q05961</accession>
<proteinExistence type="evidence at transcript level"/>
<organism>
    <name type="scientific">Rattus norvegicus</name>
    <name type="common">Rat</name>
    <dbReference type="NCBI Taxonomy" id="10116"/>
    <lineage>
        <taxon>Eukaryota</taxon>
        <taxon>Metazoa</taxon>
        <taxon>Chordata</taxon>
        <taxon>Craniata</taxon>
        <taxon>Vertebrata</taxon>
        <taxon>Euteleostomi</taxon>
        <taxon>Mammalia</taxon>
        <taxon>Eutheria</taxon>
        <taxon>Euarchontoglires</taxon>
        <taxon>Glires</taxon>
        <taxon>Rodentia</taxon>
        <taxon>Myomorpha</taxon>
        <taxon>Muroidea</taxon>
        <taxon>Muridae</taxon>
        <taxon>Murinae</taxon>
        <taxon>Rattus</taxon>
    </lineage>
</organism>
<keyword id="KW-0051">Antiviral defense</keyword>
<keyword id="KW-0067">ATP-binding</keyword>
<keyword id="KW-0963">Cytoplasm</keyword>
<keyword id="KW-0256">Endoplasmic reticulum</keyword>
<keyword id="KW-0391">Immunity</keyword>
<keyword id="KW-0399">Innate immunity</keyword>
<keyword id="KW-0460">Magnesium</keyword>
<keyword id="KW-0479">Metal-binding</keyword>
<keyword id="KW-0492">Microsome</keyword>
<keyword id="KW-0496">Mitochondrion</keyword>
<keyword id="KW-0547">Nucleotide-binding</keyword>
<keyword id="KW-0548">Nucleotidyltransferase</keyword>
<keyword id="KW-0539">Nucleus</keyword>
<keyword id="KW-1185">Reference proteome</keyword>
<keyword id="KW-0694">RNA-binding</keyword>
<keyword id="KW-0808">Transferase</keyword>
<feature type="chain" id="PRO_0000160263" description="2'-5'-oligoadenylate synthase 1A">
    <location>
        <begin position="1"/>
        <end position="358"/>
    </location>
</feature>
<feature type="region of interest" description="Interaction with dsRNA" evidence="1">
    <location>
        <begin position="14"/>
        <end position="61"/>
    </location>
</feature>
<feature type="region of interest" description="Interaction with dsRNA" evidence="1">
    <location>
        <begin position="201"/>
        <end position="211"/>
    </location>
</feature>
<feature type="binding site" evidence="1">
    <location>
        <position position="64"/>
    </location>
    <ligand>
        <name>ATP</name>
        <dbReference type="ChEBI" id="CHEBI:30616"/>
    </ligand>
</feature>
<feature type="binding site" evidence="1">
    <location>
        <position position="76"/>
    </location>
    <ligand>
        <name>Mg(2+)</name>
        <dbReference type="ChEBI" id="CHEBI:18420"/>
        <note>catalytic</note>
    </ligand>
</feature>
<feature type="binding site" evidence="1">
    <location>
        <position position="78"/>
    </location>
    <ligand>
        <name>Mg(2+)</name>
        <dbReference type="ChEBI" id="CHEBI:18420"/>
        <note>catalytic</note>
    </ligand>
</feature>
<feature type="binding site" evidence="1">
    <location>
        <position position="149"/>
    </location>
    <ligand>
        <name>Mg(2+)</name>
        <dbReference type="ChEBI" id="CHEBI:18420"/>
        <note>catalytic</note>
    </ligand>
</feature>
<feature type="binding site" evidence="3">
    <location>
        <position position="211"/>
    </location>
    <ligand>
        <name>ATP</name>
        <dbReference type="ChEBI" id="CHEBI:30616"/>
    </ligand>
</feature>
<feature type="binding site" evidence="1">
    <location>
        <position position="214"/>
    </location>
    <ligand>
        <name>ATP</name>
        <dbReference type="ChEBI" id="CHEBI:30616"/>
    </ligand>
</feature>
<feature type="binding site" evidence="1">
    <location>
        <position position="231"/>
    </location>
    <ligand>
        <name>ATP</name>
        <dbReference type="ChEBI" id="CHEBI:30616"/>
    </ligand>
</feature>
<name>OAS1A_RAT</name>
<evidence type="ECO:0000250" key="1">
    <source>
        <dbReference type="UniProtKB" id="P00973"/>
    </source>
</evidence>
<evidence type="ECO:0000250" key="2">
    <source>
        <dbReference type="UniProtKB" id="P11928"/>
    </source>
</evidence>
<evidence type="ECO:0000250" key="3">
    <source>
        <dbReference type="UniProtKB" id="P29728"/>
    </source>
</evidence>
<evidence type="ECO:0000303" key="4">
    <source>
    </source>
</evidence>
<evidence type="ECO:0000305" key="5"/>
<reference key="1">
    <citation type="journal article" date="1993" name="Biotechnology (N.Y.)">
        <title>Transgenic potato plants expressing mammalian 2'-5' oligoadenylate synthetase are protected from potato virus X infection under field conditions.</title>
        <authorList>
            <person name="Truve E."/>
            <person name="Aaspollu A."/>
            <person name="Honkanen J."/>
            <person name="Puska R."/>
            <person name="Mehto M."/>
            <person name="Hassi A."/>
            <person name="Teeri T.H."/>
            <person name="Kelve M."/>
            <person name="Seppanen P."/>
            <person name="Saarma M."/>
        </authorList>
    </citation>
    <scope>NUCLEOTIDE SEQUENCE [MRNA]</scope>
</reference>
<reference key="2">
    <citation type="journal article" date="2006" name="J. Mol. Evol.">
        <title>The mammalian 2'-5' oligoadenylate synthetase gene family: evidence for concerted evolution of paralogous Oas1 genes in Rodentia and Artiodactyla.</title>
        <authorList>
            <person name="Perelygin A.A."/>
            <person name="Zharkikh A.A."/>
            <person name="Scherbik S.V."/>
            <person name="Brinton M.A."/>
        </authorList>
    </citation>
    <scope>REVIEW</scope>
</reference>
<sequence>MEQELRSTPSWKLDKFIEVYLLPNTSFRDDVKSAINVLCDFLKERCFRDTVHPVRVSKVVKGGSSGKGTTLKGKSDADLVVFLNNFTSFEDQLNRRGEFIKEIKKQLYEVQREKHFRVKFEVQSSWWPNPRALSFKLSAPHLQQEVEFDVLPAYDVLGHVSLYSNPDPKIYTILISECISLGKDGEFSTCFTELQRNFLKQRPTKLKSLIRLVKHWYQLCKEKLGKPLPPQYALELLTVYAWERGNGITEFNTAQGFRTILELVTKYQQLRIYWTKYYDFQHPDVSKYLHRQLRKSRPVILDPADPTGNVAGGNQEGWRRLASEARLWLQYPCFMNRGGSPVSSWEVPVDEAWSCILL</sequence>
<protein>
    <recommendedName>
        <fullName>2'-5'-oligoadenylate synthase 1A</fullName>
        <shortName>(2-5')oligo(A) synthase 1A</shortName>
        <shortName>2-5A synthase 1A</shortName>
        <ecNumber evidence="2">2.7.7.84</ecNumber>
    </recommendedName>
</protein>
<gene>
    <name type="primary">Oas1a</name>
    <name type="synonym">Oas1</name>
</gene>
<comment type="function">
    <text evidence="1">Interferon-induced, dsRNA-activated antiviral enzyme which plays a critical role in cellular innate antiviral response. In addition, it may also play a role in other cellular processes such as apoptosis, cell growth, differentiation and gene regulation. Synthesizes higher oligomers of 2'-5'-oligoadenylates (2-5A) from ATP which then bind to the inactive monomeric form of ribonuclease L (RNase L) leading to its dimerization and subsequent activation. Activation of RNase L leads to degradation of cellular as well as viral RNA, resulting in the inhibition of protein synthesis, thus terminating viral replication. Can mediate the antiviral effect via the classical RNase L-dependent pathway or an alternative antiviral pathway independent of RNase L.</text>
</comment>
<comment type="catalytic activity">
    <reaction evidence="2">
        <text>3 ATP = 5'-triphosphoadenylyl-(2'-&gt;5')-adenylyl-(2'-&gt;5')-adenosine + 2 diphosphate</text>
        <dbReference type="Rhea" id="RHEA:34407"/>
        <dbReference type="ChEBI" id="CHEBI:30616"/>
        <dbReference type="ChEBI" id="CHEBI:33019"/>
        <dbReference type="ChEBI" id="CHEBI:67143"/>
        <dbReference type="EC" id="2.7.7.84"/>
    </reaction>
</comment>
<comment type="cofactor">
    <cofactor evidence="1">
        <name>Mg(2+)</name>
        <dbReference type="ChEBI" id="CHEBI:18420"/>
    </cofactor>
</comment>
<comment type="activity regulation">
    <text evidence="1">Produced as a latent enzyme which is activated by dsRNA generated during the course of viral infection. The dsRNA activator must be at least 15 nucleotides long, and no modification of the 2'-hydroxyl group is tolerated. ssRNA or dsDNA do not act as activators.</text>
</comment>
<comment type="subunit">
    <text evidence="1 2 4">Monomer. Homotetramer. Interacts with OAS1D.</text>
</comment>
<comment type="subcellular location">
    <subcellularLocation>
        <location evidence="2">Cytoplasm</location>
    </subcellularLocation>
    <subcellularLocation>
        <location evidence="1">Mitochondrion</location>
    </subcellularLocation>
    <subcellularLocation>
        <location evidence="1">Nucleus</location>
    </subcellularLocation>
    <subcellularLocation>
        <location evidence="1">Microsome</location>
    </subcellularLocation>
    <subcellularLocation>
        <location evidence="1">Endoplasmic reticulum</location>
    </subcellularLocation>
    <text evidence="1">Associated with different subcellular fractions such as mitochondrial, nuclear, and rough/smooth microsomal fractions.</text>
</comment>
<comment type="similarity">
    <text evidence="5">Belongs to the 2-5A synthase family.</text>
</comment>
<dbReference type="EC" id="2.7.7.84" evidence="2"/>
<dbReference type="EMBL" id="Z18877">
    <property type="protein sequence ID" value="CAA79317.1"/>
    <property type="molecule type" value="mRNA"/>
</dbReference>
<dbReference type="PIR" id="S31407">
    <property type="entry name" value="S31407"/>
</dbReference>
<dbReference type="RefSeq" id="NP_620268.1">
    <property type="nucleotide sequence ID" value="NM_138913.1"/>
</dbReference>
<dbReference type="SMR" id="Q05961"/>
<dbReference type="FunCoup" id="Q05961">
    <property type="interactions" value="197"/>
</dbReference>
<dbReference type="STRING" id="10116.ENSRNOP00000036734"/>
<dbReference type="iPTMnet" id="Q05961"/>
<dbReference type="PhosphoSitePlus" id="Q05961"/>
<dbReference type="PaxDb" id="10116-ENSRNOP00000036734"/>
<dbReference type="GeneID" id="192281"/>
<dbReference type="KEGG" id="rno:192281"/>
<dbReference type="UCSC" id="RGD:621760">
    <property type="organism name" value="rat"/>
</dbReference>
<dbReference type="AGR" id="RGD:621760"/>
<dbReference type="CTD" id="246730"/>
<dbReference type="RGD" id="621760">
    <property type="gene designation" value="Oas1a"/>
</dbReference>
<dbReference type="eggNOG" id="KOG0001">
    <property type="taxonomic scope" value="Eukaryota"/>
</dbReference>
<dbReference type="InParanoid" id="Q05961"/>
<dbReference type="BRENDA" id="2.7.7.84">
    <property type="organism ID" value="5301"/>
</dbReference>
<dbReference type="PRO" id="PR:Q05961"/>
<dbReference type="Proteomes" id="UP000002494">
    <property type="component" value="Unplaced"/>
</dbReference>
<dbReference type="GO" id="GO:0005737">
    <property type="term" value="C:cytoplasm"/>
    <property type="evidence" value="ECO:0000266"/>
    <property type="project" value="RGD"/>
</dbReference>
<dbReference type="GO" id="GO:0005829">
    <property type="term" value="C:cytosol"/>
    <property type="evidence" value="ECO:0000318"/>
    <property type="project" value="GO_Central"/>
</dbReference>
<dbReference type="GO" id="GO:0005783">
    <property type="term" value="C:endoplasmic reticulum"/>
    <property type="evidence" value="ECO:0007669"/>
    <property type="project" value="UniProtKB-SubCell"/>
</dbReference>
<dbReference type="GO" id="GO:0016020">
    <property type="term" value="C:membrane"/>
    <property type="evidence" value="ECO:0000318"/>
    <property type="project" value="GO_Central"/>
</dbReference>
<dbReference type="GO" id="GO:0005739">
    <property type="term" value="C:mitochondrion"/>
    <property type="evidence" value="ECO:0007669"/>
    <property type="project" value="UniProtKB-SubCell"/>
</dbReference>
<dbReference type="GO" id="GO:0005654">
    <property type="term" value="C:nucleoplasm"/>
    <property type="evidence" value="ECO:0000318"/>
    <property type="project" value="GO_Central"/>
</dbReference>
<dbReference type="GO" id="GO:0005634">
    <property type="term" value="C:nucleus"/>
    <property type="evidence" value="ECO:0000314"/>
    <property type="project" value="UniProtKB"/>
</dbReference>
<dbReference type="GO" id="GO:0001730">
    <property type="term" value="F:2'-5'-oligoadenylate synthetase activity"/>
    <property type="evidence" value="ECO:0000314"/>
    <property type="project" value="RGD"/>
</dbReference>
<dbReference type="GO" id="GO:0005524">
    <property type="term" value="F:ATP binding"/>
    <property type="evidence" value="ECO:0007669"/>
    <property type="project" value="UniProtKB-KW"/>
</dbReference>
<dbReference type="GO" id="GO:0003725">
    <property type="term" value="F:double-stranded RNA binding"/>
    <property type="evidence" value="ECO:0000266"/>
    <property type="project" value="RGD"/>
</dbReference>
<dbReference type="GO" id="GO:0046872">
    <property type="term" value="F:metal ion binding"/>
    <property type="evidence" value="ECO:0007669"/>
    <property type="project" value="UniProtKB-KW"/>
</dbReference>
<dbReference type="GO" id="GO:0140374">
    <property type="term" value="P:antiviral innate immune response"/>
    <property type="evidence" value="ECO:0000318"/>
    <property type="project" value="GO_Central"/>
</dbReference>
<dbReference type="GO" id="GO:0035458">
    <property type="term" value="P:cellular response to interferon-beta"/>
    <property type="evidence" value="ECO:0000266"/>
    <property type="project" value="RGD"/>
</dbReference>
<dbReference type="GO" id="GO:0042593">
    <property type="term" value="P:glucose homeostasis"/>
    <property type="evidence" value="ECO:0000266"/>
    <property type="project" value="RGD"/>
</dbReference>
<dbReference type="GO" id="GO:0006006">
    <property type="term" value="P:glucose metabolic process"/>
    <property type="evidence" value="ECO:0000266"/>
    <property type="project" value="RGD"/>
</dbReference>
<dbReference type="GO" id="GO:0070106">
    <property type="term" value="P:interleukin-27-mediated signaling pathway"/>
    <property type="evidence" value="ECO:0000266"/>
    <property type="project" value="RGD"/>
</dbReference>
<dbReference type="GO" id="GO:2000342">
    <property type="term" value="P:negative regulation of chemokine (C-X-C motif) ligand 2 production"/>
    <property type="evidence" value="ECO:0000266"/>
    <property type="project" value="RGD"/>
</dbReference>
<dbReference type="GO" id="GO:0071659">
    <property type="term" value="P:negative regulation of IP-10 production"/>
    <property type="evidence" value="ECO:0000266"/>
    <property type="project" value="RGD"/>
</dbReference>
<dbReference type="GO" id="GO:0060339">
    <property type="term" value="P:negative regulation of type I interferon-mediated signaling pathway"/>
    <property type="evidence" value="ECO:0000266"/>
    <property type="project" value="RGD"/>
</dbReference>
<dbReference type="GO" id="GO:0045071">
    <property type="term" value="P:negative regulation of viral genome replication"/>
    <property type="evidence" value="ECO:0000266"/>
    <property type="project" value="RGD"/>
</dbReference>
<dbReference type="GO" id="GO:0032728">
    <property type="term" value="P:positive regulation of interferon-beta production"/>
    <property type="evidence" value="ECO:0000266"/>
    <property type="project" value="RGD"/>
</dbReference>
<dbReference type="GO" id="GO:0071639">
    <property type="term" value="P:positive regulation of monocyte chemotactic protein-1 production"/>
    <property type="evidence" value="ECO:0000266"/>
    <property type="project" value="RGD"/>
</dbReference>
<dbReference type="GO" id="GO:0032760">
    <property type="term" value="P:positive regulation of tumor necrosis factor production"/>
    <property type="evidence" value="ECO:0000266"/>
    <property type="project" value="RGD"/>
</dbReference>
<dbReference type="GO" id="GO:0009615">
    <property type="term" value="P:response to virus"/>
    <property type="evidence" value="ECO:0000266"/>
    <property type="project" value="RGD"/>
</dbReference>
<dbReference type="GO" id="GO:0043129">
    <property type="term" value="P:surfactant homeostasis"/>
    <property type="evidence" value="ECO:0000266"/>
    <property type="project" value="RGD"/>
</dbReference>
<dbReference type="GO" id="GO:0034138">
    <property type="term" value="P:toll-like receptor 3 signaling pathway"/>
    <property type="evidence" value="ECO:0000266"/>
    <property type="project" value="RGD"/>
</dbReference>
<dbReference type="GO" id="GO:0034142">
    <property type="term" value="P:toll-like receptor 4 signaling pathway"/>
    <property type="evidence" value="ECO:0000266"/>
    <property type="project" value="RGD"/>
</dbReference>
<dbReference type="GO" id="GO:0060337">
    <property type="term" value="P:type I interferon-mediated signaling pathway"/>
    <property type="evidence" value="ECO:0000318"/>
    <property type="project" value="GO_Central"/>
</dbReference>
<dbReference type="CDD" id="cd05400">
    <property type="entry name" value="NT_2-5OAS_ClassI-CCAase"/>
    <property type="match status" value="1"/>
</dbReference>
<dbReference type="FunFam" id="1.10.1410.20:FF:000001">
    <property type="entry name" value="2'-5'-oligoadenylate synthetase 1"/>
    <property type="match status" value="1"/>
</dbReference>
<dbReference type="FunFam" id="3.30.460.10:FF:000007">
    <property type="entry name" value="2'-5'-oligoadenylate synthetase 1"/>
    <property type="match status" value="1"/>
</dbReference>
<dbReference type="Gene3D" id="1.10.1410.20">
    <property type="entry name" value="2'-5'-oligoadenylate synthetase 1, domain 2"/>
    <property type="match status" value="1"/>
</dbReference>
<dbReference type="Gene3D" id="3.30.460.10">
    <property type="entry name" value="Beta Polymerase, domain 2"/>
    <property type="match status" value="1"/>
</dbReference>
<dbReference type="InterPro" id="IPR018952">
    <property type="entry name" value="2-5-oligoAdlate_synth_1_dom2/C"/>
</dbReference>
<dbReference type="InterPro" id="IPR006117">
    <property type="entry name" value="2-5OAS_C_CS"/>
</dbReference>
<dbReference type="InterPro" id="IPR043518">
    <property type="entry name" value="2-5OAS_N_CS"/>
</dbReference>
<dbReference type="InterPro" id="IPR006116">
    <property type="entry name" value="NT_2-5OAS_ClassI-CCAase"/>
</dbReference>
<dbReference type="InterPro" id="IPR043519">
    <property type="entry name" value="NT_sf"/>
</dbReference>
<dbReference type="InterPro" id="IPR002934">
    <property type="entry name" value="Polymerase_NTP_transf_dom"/>
</dbReference>
<dbReference type="PANTHER" id="PTHR11258:SF13">
    <property type="entry name" value="2'-5'-OLIGOADENYLATE SYNTHASE 1"/>
    <property type="match status" value="1"/>
</dbReference>
<dbReference type="PANTHER" id="PTHR11258">
    <property type="entry name" value="2-5 OLIGOADENYLATE SYNTHETASE"/>
    <property type="match status" value="1"/>
</dbReference>
<dbReference type="Pfam" id="PF01909">
    <property type="entry name" value="NTP_transf_2"/>
    <property type="match status" value="1"/>
</dbReference>
<dbReference type="Pfam" id="PF10421">
    <property type="entry name" value="OAS1_C"/>
    <property type="match status" value="1"/>
</dbReference>
<dbReference type="SUPFAM" id="SSF81301">
    <property type="entry name" value="Nucleotidyltransferase"/>
    <property type="match status" value="1"/>
</dbReference>
<dbReference type="SUPFAM" id="SSF81631">
    <property type="entry name" value="PAP/OAS1 substrate-binding domain"/>
    <property type="match status" value="1"/>
</dbReference>
<dbReference type="PROSITE" id="PS00832">
    <property type="entry name" value="25A_SYNTH_1"/>
    <property type="match status" value="1"/>
</dbReference>
<dbReference type="PROSITE" id="PS00833">
    <property type="entry name" value="25A_SYNTH_2"/>
    <property type="match status" value="1"/>
</dbReference>
<dbReference type="PROSITE" id="PS50152">
    <property type="entry name" value="25A_SYNTH_3"/>
    <property type="match status" value="1"/>
</dbReference>